<evidence type="ECO:0000250" key="1">
    <source>
        <dbReference type="UniProtKB" id="Q99J78"/>
    </source>
</evidence>
<evidence type="ECO:0000255" key="2">
    <source>
        <dbReference type="PROSITE-ProRule" id="PRU00226"/>
    </source>
</evidence>
<evidence type="ECO:0000256" key="3">
    <source>
        <dbReference type="SAM" id="MobiDB-lite"/>
    </source>
</evidence>
<evidence type="ECO:0000305" key="4"/>
<sequence length="443" mass="51439">MEYDDKLVRFRQGHLNPFDKQGEAERQPAACETEPSKDFPTSSPLSVPEFHCPDRVMDLGVSEDHFSRPVGLFLASDIQQLRQAIEECKQEILELPEHSDRQKDAVVRLIHLRLKLQELNDPLEDEPNLRILLEHRFYKEKSKSVKHLCDKCSTFIWGLIQTWYTCTGCSYRCHSKCLNLITKPCVRSKVSHQAEYELSICPEAGLDSQDYRCAECRTPISLRSVPSEARQCDYTGQYYCISCHWNDIAVIPARAIHNWDFEPHKVSRCSMRYLALMLGRPVLKLREINPLLFNYVEELVEIRKLRQDILLMKPYFITCKEAMEARLLLQLQDRQHFVENDDMYSLQDLLDISSGRLGCSLTEIHTTFAKHIKLDCERCQAKGFVCELCKEGDILFPFDSHTSVCQDCAAVFHRDCYYDNSTSCPRCTRLNLRKQVQNPGEEP</sequence>
<organism>
    <name type="scientific">Xenopus tropicalis</name>
    <name type="common">Western clawed frog</name>
    <name type="synonym">Silurana tropicalis</name>
    <dbReference type="NCBI Taxonomy" id="8364"/>
    <lineage>
        <taxon>Eukaryota</taxon>
        <taxon>Metazoa</taxon>
        <taxon>Chordata</taxon>
        <taxon>Craniata</taxon>
        <taxon>Vertebrata</taxon>
        <taxon>Euteleostomi</taxon>
        <taxon>Amphibia</taxon>
        <taxon>Batrachia</taxon>
        <taxon>Anura</taxon>
        <taxon>Pipoidea</taxon>
        <taxon>Pipidae</taxon>
        <taxon>Xenopodinae</taxon>
        <taxon>Xenopus</taxon>
        <taxon>Silurana</taxon>
    </lineage>
</organism>
<gene>
    <name type="primary">def8</name>
</gene>
<protein>
    <recommendedName>
        <fullName>Differentially expressed in FDCP 8 homolog</fullName>
        <shortName>DEF-8</shortName>
    </recommendedName>
</protein>
<name>DEFI8_XENTR</name>
<feature type="chain" id="PRO_0000321918" description="Differentially expressed in FDCP 8 homolog">
    <location>
        <begin position="1"/>
        <end position="443"/>
    </location>
</feature>
<feature type="zinc finger region" description="Phorbol-ester/DAG-type 1" evidence="2">
    <location>
        <begin position="134"/>
        <end position="185"/>
    </location>
</feature>
<feature type="zinc finger region" description="Phorbol-ester/DAG-type 2" evidence="2">
    <location>
        <begin position="364"/>
        <end position="424"/>
    </location>
</feature>
<feature type="region of interest" description="Disordered" evidence="3">
    <location>
        <begin position="14"/>
        <end position="44"/>
    </location>
</feature>
<reference key="1">
    <citation type="submission" date="2004-06" db="EMBL/GenBank/DDBJ databases">
        <authorList>
            <consortium name="NIH - Xenopus Gene Collection (XGC) project"/>
        </authorList>
    </citation>
    <scope>NUCLEOTIDE SEQUENCE [LARGE SCALE MRNA]</scope>
</reference>
<comment type="function">
    <text evidence="1">Positively regulates lysosome peripheral distribution and ruffled border formation in osteoclasts. Involved in bone resorption.</text>
</comment>
<comment type="similarity">
    <text evidence="4">Belongs to the DEF8 family.</text>
</comment>
<keyword id="KW-0479">Metal-binding</keyword>
<keyword id="KW-1185">Reference proteome</keyword>
<keyword id="KW-0677">Repeat</keyword>
<keyword id="KW-0862">Zinc</keyword>
<keyword id="KW-0863">Zinc-finger</keyword>
<proteinExistence type="evidence at transcript level"/>
<dbReference type="EMBL" id="BC075269">
    <property type="protein sequence ID" value="AAH75269.1"/>
    <property type="molecule type" value="mRNA"/>
</dbReference>
<dbReference type="RefSeq" id="NP_001004881.1">
    <property type="nucleotide sequence ID" value="NM_001004881.1"/>
</dbReference>
<dbReference type="SMR" id="Q6DJB3"/>
<dbReference type="FunCoup" id="Q6DJB3">
    <property type="interactions" value="171"/>
</dbReference>
<dbReference type="STRING" id="8364.ENSXETP00000008744"/>
<dbReference type="PaxDb" id="8364-ENSXETP00000056753"/>
<dbReference type="DNASU" id="448211"/>
<dbReference type="GeneID" id="448211"/>
<dbReference type="KEGG" id="xtr:448211"/>
<dbReference type="AGR" id="Xenbase:XB-GENE-967882"/>
<dbReference type="CTD" id="54849"/>
<dbReference type="Xenbase" id="XB-GENE-967882">
    <property type="gene designation" value="def8"/>
</dbReference>
<dbReference type="eggNOG" id="KOG1829">
    <property type="taxonomic scope" value="Eukaryota"/>
</dbReference>
<dbReference type="InParanoid" id="Q6DJB3"/>
<dbReference type="OMA" id="NMICPKC"/>
<dbReference type="OrthoDB" id="1918044at2759"/>
<dbReference type="Proteomes" id="UP000008143">
    <property type="component" value="Chromosome 4"/>
</dbReference>
<dbReference type="Bgee" id="ENSXETG00000023412">
    <property type="expression patterns" value="Expressed in testis and 12 other cell types or tissues"/>
</dbReference>
<dbReference type="GO" id="GO:0008270">
    <property type="term" value="F:zinc ion binding"/>
    <property type="evidence" value="ECO:0007669"/>
    <property type="project" value="UniProtKB-KW"/>
</dbReference>
<dbReference type="GO" id="GO:0032418">
    <property type="term" value="P:lysosome localization"/>
    <property type="evidence" value="ECO:0000250"/>
    <property type="project" value="UniProtKB"/>
</dbReference>
<dbReference type="GO" id="GO:0045780">
    <property type="term" value="P:positive regulation of bone resorption"/>
    <property type="evidence" value="ECO:0000250"/>
    <property type="project" value="UniProtKB"/>
</dbReference>
<dbReference type="GO" id="GO:1900029">
    <property type="term" value="P:positive regulation of ruffle assembly"/>
    <property type="evidence" value="ECO:0000250"/>
    <property type="project" value="UniProtKB"/>
</dbReference>
<dbReference type="CDD" id="cd20819">
    <property type="entry name" value="C1_DEF8"/>
    <property type="match status" value="1"/>
</dbReference>
<dbReference type="FunFam" id="3.30.60.20:FF:000042">
    <property type="entry name" value="differentially expressed in FDCP 8 homolog isoform X2"/>
    <property type="match status" value="1"/>
</dbReference>
<dbReference type="Gene3D" id="3.30.60.20">
    <property type="match status" value="1"/>
</dbReference>
<dbReference type="InterPro" id="IPR046349">
    <property type="entry name" value="C1-like_sf"/>
</dbReference>
<dbReference type="InterPro" id="IPR051366">
    <property type="entry name" value="DEF8"/>
</dbReference>
<dbReference type="InterPro" id="IPR047983">
    <property type="entry name" value="DEF8_C1"/>
</dbReference>
<dbReference type="InterPro" id="IPR036280">
    <property type="entry name" value="Multihaem_cyt_sf"/>
</dbReference>
<dbReference type="InterPro" id="IPR002219">
    <property type="entry name" value="PE/DAG-bd"/>
</dbReference>
<dbReference type="InterPro" id="IPR025258">
    <property type="entry name" value="RH_dom"/>
</dbReference>
<dbReference type="PANTHER" id="PTHR12326:SF3">
    <property type="entry name" value="DIFFERENTIALLY EXPRESSED IN FDCP 8 HOMOLOG"/>
    <property type="match status" value="1"/>
</dbReference>
<dbReference type="PANTHER" id="PTHR12326">
    <property type="entry name" value="PLECKSTRIN HOMOLOGY DOMAIN CONTAINING PROTEIN"/>
    <property type="match status" value="1"/>
</dbReference>
<dbReference type="Pfam" id="PF00130">
    <property type="entry name" value="C1_1"/>
    <property type="match status" value="1"/>
</dbReference>
<dbReference type="Pfam" id="PF13901">
    <property type="entry name" value="RH_dom"/>
    <property type="match status" value="1"/>
</dbReference>
<dbReference type="SMART" id="SM00109">
    <property type="entry name" value="C1"/>
    <property type="match status" value="2"/>
</dbReference>
<dbReference type="SMART" id="SM01175">
    <property type="entry name" value="DUF4206"/>
    <property type="match status" value="1"/>
</dbReference>
<dbReference type="SUPFAM" id="SSF57889">
    <property type="entry name" value="Cysteine-rich domain"/>
    <property type="match status" value="1"/>
</dbReference>
<dbReference type="SUPFAM" id="SSF48695">
    <property type="entry name" value="Multiheme cytochromes"/>
    <property type="match status" value="1"/>
</dbReference>
<dbReference type="PROSITE" id="PS00479">
    <property type="entry name" value="ZF_DAG_PE_1"/>
    <property type="match status" value="1"/>
</dbReference>
<dbReference type="PROSITE" id="PS50081">
    <property type="entry name" value="ZF_DAG_PE_2"/>
    <property type="match status" value="1"/>
</dbReference>
<accession>Q6DJB3</accession>